<accession>A9KK83</accession>
<feature type="chain" id="PRO_1000074453" description="UDP-N-acetylglucosamine--N-acetylmuramyl-(pentapeptide) pyrophosphoryl-undecaprenol N-acetylglucosamine transferase">
    <location>
        <begin position="1"/>
        <end position="355"/>
    </location>
</feature>
<feature type="binding site" evidence="1">
    <location>
        <begin position="11"/>
        <end position="13"/>
    </location>
    <ligand>
        <name>UDP-N-acetyl-alpha-D-glucosamine</name>
        <dbReference type="ChEBI" id="CHEBI:57705"/>
    </ligand>
</feature>
<feature type="binding site" evidence="1">
    <location>
        <position position="164"/>
    </location>
    <ligand>
        <name>UDP-N-acetyl-alpha-D-glucosamine</name>
        <dbReference type="ChEBI" id="CHEBI:57705"/>
    </ligand>
</feature>
<feature type="binding site" evidence="1">
    <location>
        <position position="194"/>
    </location>
    <ligand>
        <name>UDP-N-acetyl-alpha-D-glucosamine</name>
        <dbReference type="ChEBI" id="CHEBI:57705"/>
    </ligand>
</feature>
<feature type="binding site" evidence="1">
    <location>
        <position position="289"/>
    </location>
    <ligand>
        <name>UDP-N-acetyl-alpha-D-glucosamine</name>
        <dbReference type="ChEBI" id="CHEBI:57705"/>
    </ligand>
</feature>
<protein>
    <recommendedName>
        <fullName evidence="1">UDP-N-acetylglucosamine--N-acetylmuramyl-(pentapeptide) pyrophosphoryl-undecaprenol N-acetylglucosamine transferase</fullName>
        <ecNumber evidence="1">2.4.1.227</ecNumber>
    </recommendedName>
    <alternativeName>
        <fullName evidence="1">Undecaprenyl-PP-MurNAc-pentapeptide-UDPGlcNAc GlcNAc transferase</fullName>
    </alternativeName>
</protein>
<evidence type="ECO:0000255" key="1">
    <source>
        <dbReference type="HAMAP-Rule" id="MF_00033"/>
    </source>
</evidence>
<proteinExistence type="inferred from homology"/>
<comment type="function">
    <text evidence="1">Cell wall formation. Catalyzes the transfer of a GlcNAc subunit on undecaprenyl-pyrophosphoryl-MurNAc-pentapeptide (lipid intermediate I) to form undecaprenyl-pyrophosphoryl-MurNAc-(pentapeptide)GlcNAc (lipid intermediate II).</text>
</comment>
<comment type="catalytic activity">
    <reaction evidence="1">
        <text>di-trans,octa-cis-undecaprenyl diphospho-N-acetyl-alpha-D-muramoyl-L-alanyl-D-glutamyl-meso-2,6-diaminopimeloyl-D-alanyl-D-alanine + UDP-N-acetyl-alpha-D-glucosamine = di-trans,octa-cis-undecaprenyl diphospho-[N-acetyl-alpha-D-glucosaminyl-(1-&gt;4)]-N-acetyl-alpha-D-muramoyl-L-alanyl-D-glutamyl-meso-2,6-diaminopimeloyl-D-alanyl-D-alanine + UDP + H(+)</text>
        <dbReference type="Rhea" id="RHEA:31227"/>
        <dbReference type="ChEBI" id="CHEBI:15378"/>
        <dbReference type="ChEBI" id="CHEBI:57705"/>
        <dbReference type="ChEBI" id="CHEBI:58223"/>
        <dbReference type="ChEBI" id="CHEBI:61387"/>
        <dbReference type="ChEBI" id="CHEBI:61388"/>
        <dbReference type="EC" id="2.4.1.227"/>
    </reaction>
</comment>
<comment type="pathway">
    <text evidence="1">Cell wall biogenesis; peptidoglycan biosynthesis.</text>
</comment>
<comment type="subcellular location">
    <subcellularLocation>
        <location evidence="1">Cell membrane</location>
        <topology evidence="1">Peripheral membrane protein</topology>
        <orientation evidence="1">Cytoplasmic side</orientation>
    </subcellularLocation>
</comment>
<comment type="similarity">
    <text evidence="1">Belongs to the glycosyltransferase 28 family. MurG subfamily.</text>
</comment>
<sequence length="355" mass="38916">MKRIVLTGGGTAGHVTPNIALIAGLKEQGYEIHYIGSYEGIERELIEKLGIPYHGISSGKLRRYLDIKNFSDPFKVLKGYREAKKLLKNLDPNVVFSKGGFVAVPVVLAAKKRKIPAIIHESDMTPGLANRLCIPSAAKVCANFPETLNYLPKEKAVLTGTPIRKELFSGNKIKGLDFCGFTANIPVLLIVGGSTGALKVNEAVRNLLPTLLKRFQVIHLCGKGKVDPSFNKHKGYVQYEYIGAELNHLFAAADIVISRAGANAICELLALRKPNILIPLSAAASRGDQILNAESFEHQGYSYVIKEEVLSNETLLQAVNHVFDNQKSYIEAMKNSNQNDAVDKIIGLIEEVRLK</sequence>
<dbReference type="EC" id="2.4.1.227" evidence="1"/>
<dbReference type="EMBL" id="CP000885">
    <property type="protein sequence ID" value="ABX44074.1"/>
    <property type="molecule type" value="Genomic_DNA"/>
</dbReference>
<dbReference type="RefSeq" id="WP_012201722.1">
    <property type="nucleotide sequence ID" value="NC_010001.1"/>
</dbReference>
<dbReference type="SMR" id="A9KK83"/>
<dbReference type="STRING" id="357809.Cphy_3727"/>
<dbReference type="CAZy" id="GT28">
    <property type="family name" value="Glycosyltransferase Family 28"/>
</dbReference>
<dbReference type="KEGG" id="cpy:Cphy_3727"/>
<dbReference type="eggNOG" id="COG0707">
    <property type="taxonomic scope" value="Bacteria"/>
</dbReference>
<dbReference type="HOGENOM" id="CLU_037404_0_0_9"/>
<dbReference type="OrthoDB" id="9808936at2"/>
<dbReference type="UniPathway" id="UPA00219"/>
<dbReference type="Proteomes" id="UP000000370">
    <property type="component" value="Chromosome"/>
</dbReference>
<dbReference type="GO" id="GO:0005886">
    <property type="term" value="C:plasma membrane"/>
    <property type="evidence" value="ECO:0007669"/>
    <property type="project" value="UniProtKB-SubCell"/>
</dbReference>
<dbReference type="GO" id="GO:0051991">
    <property type="term" value="F:UDP-N-acetyl-D-glucosamine:N-acetylmuramoyl-L-alanyl-D-glutamyl-meso-2,6-diaminopimelyl-D-alanyl-D-alanine-diphosphoundecaprenol 4-beta-N-acetylglucosaminlytransferase activity"/>
    <property type="evidence" value="ECO:0007669"/>
    <property type="project" value="RHEA"/>
</dbReference>
<dbReference type="GO" id="GO:0050511">
    <property type="term" value="F:undecaprenyldiphospho-muramoylpentapeptide beta-N-acetylglucosaminyltransferase activity"/>
    <property type="evidence" value="ECO:0007669"/>
    <property type="project" value="UniProtKB-UniRule"/>
</dbReference>
<dbReference type="GO" id="GO:0005975">
    <property type="term" value="P:carbohydrate metabolic process"/>
    <property type="evidence" value="ECO:0007669"/>
    <property type="project" value="InterPro"/>
</dbReference>
<dbReference type="GO" id="GO:0051301">
    <property type="term" value="P:cell division"/>
    <property type="evidence" value="ECO:0007669"/>
    <property type="project" value="UniProtKB-KW"/>
</dbReference>
<dbReference type="GO" id="GO:0071555">
    <property type="term" value="P:cell wall organization"/>
    <property type="evidence" value="ECO:0007669"/>
    <property type="project" value="UniProtKB-KW"/>
</dbReference>
<dbReference type="GO" id="GO:0030259">
    <property type="term" value="P:lipid glycosylation"/>
    <property type="evidence" value="ECO:0007669"/>
    <property type="project" value="UniProtKB-UniRule"/>
</dbReference>
<dbReference type="GO" id="GO:0009252">
    <property type="term" value="P:peptidoglycan biosynthetic process"/>
    <property type="evidence" value="ECO:0007669"/>
    <property type="project" value="UniProtKB-UniRule"/>
</dbReference>
<dbReference type="GO" id="GO:0008360">
    <property type="term" value="P:regulation of cell shape"/>
    <property type="evidence" value="ECO:0007669"/>
    <property type="project" value="UniProtKB-KW"/>
</dbReference>
<dbReference type="CDD" id="cd03785">
    <property type="entry name" value="GT28_MurG"/>
    <property type="match status" value="1"/>
</dbReference>
<dbReference type="Gene3D" id="3.40.50.2000">
    <property type="entry name" value="Glycogen Phosphorylase B"/>
    <property type="match status" value="2"/>
</dbReference>
<dbReference type="HAMAP" id="MF_00033">
    <property type="entry name" value="MurG"/>
    <property type="match status" value="1"/>
</dbReference>
<dbReference type="InterPro" id="IPR006009">
    <property type="entry name" value="GlcNAc_MurG"/>
</dbReference>
<dbReference type="InterPro" id="IPR007235">
    <property type="entry name" value="Glyco_trans_28_C"/>
</dbReference>
<dbReference type="InterPro" id="IPR004276">
    <property type="entry name" value="GlycoTrans_28_N"/>
</dbReference>
<dbReference type="NCBIfam" id="TIGR01133">
    <property type="entry name" value="murG"/>
    <property type="match status" value="1"/>
</dbReference>
<dbReference type="NCBIfam" id="NF009102">
    <property type="entry name" value="PRK12446.1"/>
    <property type="match status" value="1"/>
</dbReference>
<dbReference type="PANTHER" id="PTHR21015:SF27">
    <property type="entry name" value="UDP-N-ACETYLGLUCOSAMINE--N-ACETYLMURAMYL-(PENTAPEPTIDE) PYROPHOSPHORYL-UNDECAPRENOL N-ACETYLGLUCOSAMINE TRANSFERASE"/>
    <property type="match status" value="1"/>
</dbReference>
<dbReference type="PANTHER" id="PTHR21015">
    <property type="entry name" value="UDP-N-ACETYLGLUCOSAMINE--N-ACETYLMURAMYL-(PENTAPEPTIDE) PYROPHOSPHORYL-UNDECAPRENOL N-ACETYLGLUCOSAMINE TRANSFERASE 1"/>
    <property type="match status" value="1"/>
</dbReference>
<dbReference type="Pfam" id="PF04101">
    <property type="entry name" value="Glyco_tran_28_C"/>
    <property type="match status" value="1"/>
</dbReference>
<dbReference type="Pfam" id="PF03033">
    <property type="entry name" value="Glyco_transf_28"/>
    <property type="match status" value="1"/>
</dbReference>
<dbReference type="SUPFAM" id="SSF53756">
    <property type="entry name" value="UDP-Glycosyltransferase/glycogen phosphorylase"/>
    <property type="match status" value="1"/>
</dbReference>
<gene>
    <name evidence="1" type="primary">murG</name>
    <name type="ordered locus">Cphy_3727</name>
</gene>
<reference key="1">
    <citation type="submission" date="2007-11" db="EMBL/GenBank/DDBJ databases">
        <title>Complete genome sequence of Clostridium phytofermentans ISDg.</title>
        <authorList>
            <person name="Leschine S.B."/>
            <person name="Warnick T.A."/>
            <person name="Blanchard J.L."/>
            <person name="Schnell D.J."/>
            <person name="Petit E.L."/>
            <person name="LaTouf W.G."/>
            <person name="Copeland A."/>
            <person name="Lucas S."/>
            <person name="Lapidus A."/>
            <person name="Barry K."/>
            <person name="Glavina del Rio T."/>
            <person name="Dalin E."/>
            <person name="Tice H."/>
            <person name="Pitluck S."/>
            <person name="Kiss H."/>
            <person name="Brettin T."/>
            <person name="Bruce D."/>
            <person name="Detter J.C."/>
            <person name="Han C."/>
            <person name="Kuske C."/>
            <person name="Schmutz J."/>
            <person name="Larimer F."/>
            <person name="Land M."/>
            <person name="Hauser L."/>
            <person name="Kyrpides N."/>
            <person name="Kim E.A."/>
            <person name="Richardson P."/>
        </authorList>
    </citation>
    <scope>NUCLEOTIDE SEQUENCE [LARGE SCALE GENOMIC DNA]</scope>
    <source>
        <strain>ATCC 700394 / DSM 18823 / ISDg</strain>
    </source>
</reference>
<name>MURG_LACP7</name>
<organism>
    <name type="scientific">Lachnoclostridium phytofermentans (strain ATCC 700394 / DSM 18823 / ISDg)</name>
    <name type="common">Clostridium phytofermentans</name>
    <dbReference type="NCBI Taxonomy" id="357809"/>
    <lineage>
        <taxon>Bacteria</taxon>
        <taxon>Bacillati</taxon>
        <taxon>Bacillota</taxon>
        <taxon>Clostridia</taxon>
        <taxon>Lachnospirales</taxon>
        <taxon>Lachnospiraceae</taxon>
    </lineage>
</organism>
<keyword id="KW-0131">Cell cycle</keyword>
<keyword id="KW-0132">Cell division</keyword>
<keyword id="KW-1003">Cell membrane</keyword>
<keyword id="KW-0133">Cell shape</keyword>
<keyword id="KW-0961">Cell wall biogenesis/degradation</keyword>
<keyword id="KW-0328">Glycosyltransferase</keyword>
<keyword id="KW-0472">Membrane</keyword>
<keyword id="KW-0573">Peptidoglycan synthesis</keyword>
<keyword id="KW-1185">Reference proteome</keyword>
<keyword id="KW-0808">Transferase</keyword>